<proteinExistence type="predicted"/>
<protein>
    <recommendedName>
        <fullName>HTH-type transcriptional regulator CueR</fullName>
    </recommendedName>
</protein>
<sequence length="143" mass="16395">MVGRDIDGAETYRISELAALAGVTKRTVDYYTNLGLLTPARSCSNYRYYDENALKRLIFIVDCKKQRLALSDIKDRLENQFPSSAKLDDEIGNLALEIDHMNQNISGILHRFERLKPEDRDKLKSKLPPEKLAVFQSFMLLLS</sequence>
<reference key="1">
    <citation type="journal article" date="1998" name="Microbiology">
        <title>The 172 kb prkA-addAB region from 83 degrees to 97 degrees of the Bacillus subtilis chromosome contains several dysfunctional genes, the glyB marker, many genes encoding transporter proteins, and the ubiquitous hit gene.</title>
        <authorList>
            <person name="Noback M.A."/>
            <person name="Holsappel S."/>
            <person name="Kiewiet R."/>
            <person name="Terpstra P."/>
            <person name="Wambutt R."/>
            <person name="Wedler H."/>
            <person name="Venema G."/>
            <person name="Bron S."/>
        </authorList>
    </citation>
    <scope>NUCLEOTIDE SEQUENCE [GENOMIC DNA]</scope>
    <source>
        <strain>168</strain>
    </source>
</reference>
<reference key="2">
    <citation type="journal article" date="1997" name="Nature">
        <title>The complete genome sequence of the Gram-positive bacterium Bacillus subtilis.</title>
        <authorList>
            <person name="Kunst F."/>
            <person name="Ogasawara N."/>
            <person name="Moszer I."/>
            <person name="Albertini A.M."/>
            <person name="Alloni G."/>
            <person name="Azevedo V."/>
            <person name="Bertero M.G."/>
            <person name="Bessieres P."/>
            <person name="Bolotin A."/>
            <person name="Borchert S."/>
            <person name="Borriss R."/>
            <person name="Boursier L."/>
            <person name="Brans A."/>
            <person name="Braun M."/>
            <person name="Brignell S.C."/>
            <person name="Bron S."/>
            <person name="Brouillet S."/>
            <person name="Bruschi C.V."/>
            <person name="Caldwell B."/>
            <person name="Capuano V."/>
            <person name="Carter N.M."/>
            <person name="Choi S.-K."/>
            <person name="Codani J.-J."/>
            <person name="Connerton I.F."/>
            <person name="Cummings N.J."/>
            <person name="Daniel R.A."/>
            <person name="Denizot F."/>
            <person name="Devine K.M."/>
            <person name="Duesterhoeft A."/>
            <person name="Ehrlich S.D."/>
            <person name="Emmerson P.T."/>
            <person name="Entian K.-D."/>
            <person name="Errington J."/>
            <person name="Fabret C."/>
            <person name="Ferrari E."/>
            <person name="Foulger D."/>
            <person name="Fritz C."/>
            <person name="Fujita M."/>
            <person name="Fujita Y."/>
            <person name="Fuma S."/>
            <person name="Galizzi A."/>
            <person name="Galleron N."/>
            <person name="Ghim S.-Y."/>
            <person name="Glaser P."/>
            <person name="Goffeau A."/>
            <person name="Golightly E.J."/>
            <person name="Grandi G."/>
            <person name="Guiseppi G."/>
            <person name="Guy B.J."/>
            <person name="Haga K."/>
            <person name="Haiech J."/>
            <person name="Harwood C.R."/>
            <person name="Henaut A."/>
            <person name="Hilbert H."/>
            <person name="Holsappel S."/>
            <person name="Hosono S."/>
            <person name="Hullo M.-F."/>
            <person name="Itaya M."/>
            <person name="Jones L.-M."/>
            <person name="Joris B."/>
            <person name="Karamata D."/>
            <person name="Kasahara Y."/>
            <person name="Klaerr-Blanchard M."/>
            <person name="Klein C."/>
            <person name="Kobayashi Y."/>
            <person name="Koetter P."/>
            <person name="Koningstein G."/>
            <person name="Krogh S."/>
            <person name="Kumano M."/>
            <person name="Kurita K."/>
            <person name="Lapidus A."/>
            <person name="Lardinois S."/>
            <person name="Lauber J."/>
            <person name="Lazarevic V."/>
            <person name="Lee S.-M."/>
            <person name="Levine A."/>
            <person name="Liu H."/>
            <person name="Masuda S."/>
            <person name="Mauel C."/>
            <person name="Medigue C."/>
            <person name="Medina N."/>
            <person name="Mellado R.P."/>
            <person name="Mizuno M."/>
            <person name="Moestl D."/>
            <person name="Nakai S."/>
            <person name="Noback M."/>
            <person name="Noone D."/>
            <person name="O'Reilly M."/>
            <person name="Ogawa K."/>
            <person name="Ogiwara A."/>
            <person name="Oudega B."/>
            <person name="Park S.-H."/>
            <person name="Parro V."/>
            <person name="Pohl T.M."/>
            <person name="Portetelle D."/>
            <person name="Porwollik S."/>
            <person name="Prescott A.M."/>
            <person name="Presecan E."/>
            <person name="Pujic P."/>
            <person name="Purnelle B."/>
            <person name="Rapoport G."/>
            <person name="Rey M."/>
            <person name="Reynolds S."/>
            <person name="Rieger M."/>
            <person name="Rivolta C."/>
            <person name="Rocha E."/>
            <person name="Roche B."/>
            <person name="Rose M."/>
            <person name="Sadaie Y."/>
            <person name="Sato T."/>
            <person name="Scanlan E."/>
            <person name="Schleich S."/>
            <person name="Schroeter R."/>
            <person name="Scoffone F."/>
            <person name="Sekiguchi J."/>
            <person name="Sekowska A."/>
            <person name="Seror S.J."/>
            <person name="Serror P."/>
            <person name="Shin B.-S."/>
            <person name="Soldo B."/>
            <person name="Sorokin A."/>
            <person name="Tacconi E."/>
            <person name="Takagi T."/>
            <person name="Takahashi H."/>
            <person name="Takemaru K."/>
            <person name="Takeuchi M."/>
            <person name="Tamakoshi A."/>
            <person name="Tanaka T."/>
            <person name="Terpstra P."/>
            <person name="Tognoni A."/>
            <person name="Tosato V."/>
            <person name="Uchiyama S."/>
            <person name="Vandenbol M."/>
            <person name="Vannier F."/>
            <person name="Vassarotti A."/>
            <person name="Viari A."/>
            <person name="Wambutt R."/>
            <person name="Wedler E."/>
            <person name="Wedler H."/>
            <person name="Weitzenegger T."/>
            <person name="Winters P."/>
            <person name="Wipat A."/>
            <person name="Yamamoto H."/>
            <person name="Yamane K."/>
            <person name="Yasumoto K."/>
            <person name="Yata K."/>
            <person name="Yoshida K."/>
            <person name="Yoshikawa H.-F."/>
            <person name="Zumstein E."/>
            <person name="Yoshikawa H."/>
            <person name="Danchin A."/>
        </authorList>
    </citation>
    <scope>NUCLEOTIDE SEQUENCE [LARGE SCALE GENOMIC DNA]</scope>
    <source>
        <strain>168</strain>
    </source>
</reference>
<reference key="3">
    <citation type="journal article" date="2003" name="Microbiology">
        <title>Two MerR homologues that affect copper induction of the Bacillus subtilis copZA operon.</title>
        <authorList>
            <person name="Gaballa A."/>
            <person name="Cao M."/>
            <person name="Helmann J.D."/>
        </authorList>
    </citation>
    <scope>FUNCTION</scope>
    <source>
        <strain>168</strain>
    </source>
</reference>
<feature type="chain" id="PRO_0000098110" description="HTH-type transcriptional regulator CueR">
    <location>
        <begin position="1"/>
        <end position="143"/>
    </location>
</feature>
<feature type="domain" description="HTH merR-type" evidence="1">
    <location>
        <begin position="11"/>
        <end position="79"/>
    </location>
</feature>
<feature type="DNA-binding region" description="H-T-H motif" evidence="1">
    <location>
        <begin position="14"/>
        <end position="33"/>
    </location>
</feature>
<keyword id="KW-0010">Activator</keyword>
<keyword id="KW-0238">DNA-binding</keyword>
<keyword id="KW-1185">Reference proteome</keyword>
<keyword id="KW-0804">Transcription</keyword>
<keyword id="KW-0805">Transcription regulation</keyword>
<comment type="function">
    <text evidence="2">Transcriptional activator of the copZA operon.</text>
</comment>
<comment type="miscellaneous">
    <text>Binds a DNA inverted repeat of copZA operon.</text>
</comment>
<organism>
    <name type="scientific">Bacillus subtilis (strain 168)</name>
    <dbReference type="NCBI Taxonomy" id="224308"/>
    <lineage>
        <taxon>Bacteria</taxon>
        <taxon>Bacillati</taxon>
        <taxon>Bacillota</taxon>
        <taxon>Bacilli</taxon>
        <taxon>Bacillales</taxon>
        <taxon>Bacillaceae</taxon>
        <taxon>Bacillus</taxon>
    </lineage>
</organism>
<gene>
    <name type="primary">cueR</name>
    <name type="synonym">yhdQ</name>
    <name type="ordered locus">BSU09560</name>
</gene>
<dbReference type="EMBL" id="Y14082">
    <property type="protein sequence ID" value="CAA74501.1"/>
    <property type="molecule type" value="Genomic_DNA"/>
</dbReference>
<dbReference type="EMBL" id="AL009126">
    <property type="protein sequence ID" value="CAB12795.1"/>
    <property type="molecule type" value="Genomic_DNA"/>
</dbReference>
<dbReference type="PIR" id="G69826">
    <property type="entry name" value="G69826"/>
</dbReference>
<dbReference type="RefSeq" id="NP_388837.1">
    <property type="nucleotide sequence ID" value="NC_000964.3"/>
</dbReference>
<dbReference type="RefSeq" id="WP_010886460.1">
    <property type="nucleotide sequence ID" value="NZ_OZ025638.1"/>
</dbReference>
<dbReference type="SMR" id="O07586"/>
<dbReference type="FunCoup" id="O07586">
    <property type="interactions" value="2"/>
</dbReference>
<dbReference type="STRING" id="224308.BSU09560"/>
<dbReference type="PaxDb" id="224308-BSU09560"/>
<dbReference type="DNASU" id="939283"/>
<dbReference type="EnsemblBacteria" id="CAB12795">
    <property type="protein sequence ID" value="CAB12795"/>
    <property type="gene ID" value="BSU_09560"/>
</dbReference>
<dbReference type="GeneID" id="939283"/>
<dbReference type="KEGG" id="bsu:BSU09560"/>
<dbReference type="PATRIC" id="fig|224308.179.peg.1029"/>
<dbReference type="eggNOG" id="COG0789">
    <property type="taxonomic scope" value="Bacteria"/>
</dbReference>
<dbReference type="InParanoid" id="O07586"/>
<dbReference type="OrthoDB" id="166060at2"/>
<dbReference type="PhylomeDB" id="O07586"/>
<dbReference type="BioCyc" id="BSUB:BSU09560-MONOMER"/>
<dbReference type="Proteomes" id="UP000001570">
    <property type="component" value="Chromosome"/>
</dbReference>
<dbReference type="GO" id="GO:0003677">
    <property type="term" value="F:DNA binding"/>
    <property type="evidence" value="ECO:0007669"/>
    <property type="project" value="UniProtKB-KW"/>
</dbReference>
<dbReference type="GO" id="GO:0003700">
    <property type="term" value="F:DNA-binding transcription factor activity"/>
    <property type="evidence" value="ECO:0000318"/>
    <property type="project" value="GO_Central"/>
</dbReference>
<dbReference type="GO" id="GO:0006355">
    <property type="term" value="P:regulation of DNA-templated transcription"/>
    <property type="evidence" value="ECO:0000318"/>
    <property type="project" value="GO_Central"/>
</dbReference>
<dbReference type="CDD" id="cd04779">
    <property type="entry name" value="HTH_MerR-like_sg4"/>
    <property type="match status" value="1"/>
</dbReference>
<dbReference type="Gene3D" id="1.10.1660.10">
    <property type="match status" value="1"/>
</dbReference>
<dbReference type="InterPro" id="IPR009061">
    <property type="entry name" value="DNA-bd_dom_put_sf"/>
</dbReference>
<dbReference type="InterPro" id="IPR000551">
    <property type="entry name" value="MerR-type_HTH_dom"/>
</dbReference>
<dbReference type="InterPro" id="IPR047057">
    <property type="entry name" value="MerR_fam"/>
</dbReference>
<dbReference type="PANTHER" id="PTHR30204:SF95">
    <property type="entry name" value="HTH-TYPE TRANSCRIPTIONAL REGULATOR CUER"/>
    <property type="match status" value="1"/>
</dbReference>
<dbReference type="PANTHER" id="PTHR30204">
    <property type="entry name" value="REDOX-CYCLING DRUG-SENSING TRANSCRIPTIONAL ACTIVATOR SOXR"/>
    <property type="match status" value="1"/>
</dbReference>
<dbReference type="Pfam" id="PF13411">
    <property type="entry name" value="MerR_1"/>
    <property type="match status" value="1"/>
</dbReference>
<dbReference type="PRINTS" id="PR00040">
    <property type="entry name" value="HTHMERR"/>
</dbReference>
<dbReference type="SMART" id="SM00422">
    <property type="entry name" value="HTH_MERR"/>
    <property type="match status" value="1"/>
</dbReference>
<dbReference type="SUPFAM" id="SSF46955">
    <property type="entry name" value="Putative DNA-binding domain"/>
    <property type="match status" value="1"/>
</dbReference>
<dbReference type="PROSITE" id="PS50937">
    <property type="entry name" value="HTH_MERR_2"/>
    <property type="match status" value="1"/>
</dbReference>
<evidence type="ECO:0000255" key="1">
    <source>
        <dbReference type="PROSITE-ProRule" id="PRU00254"/>
    </source>
</evidence>
<evidence type="ECO:0000269" key="2">
    <source>
    </source>
</evidence>
<name>CUER_BACSU</name>
<accession>O07586</accession>